<dbReference type="EMBL" id="CP000685">
    <property type="protein sequence ID" value="ABQ03421.1"/>
    <property type="molecule type" value="Genomic_DNA"/>
</dbReference>
<dbReference type="RefSeq" id="WP_012022484.1">
    <property type="nucleotide sequence ID" value="NZ_MUGZ01000005.1"/>
</dbReference>
<dbReference type="SMR" id="A5FMY8"/>
<dbReference type="STRING" id="376686.Fjoh_0385"/>
<dbReference type="KEGG" id="fjo:Fjoh_0385"/>
<dbReference type="eggNOG" id="COG0094">
    <property type="taxonomic scope" value="Bacteria"/>
</dbReference>
<dbReference type="HOGENOM" id="CLU_061015_2_1_10"/>
<dbReference type="OrthoDB" id="9806626at2"/>
<dbReference type="Proteomes" id="UP000006694">
    <property type="component" value="Chromosome"/>
</dbReference>
<dbReference type="GO" id="GO:1990904">
    <property type="term" value="C:ribonucleoprotein complex"/>
    <property type="evidence" value="ECO:0007669"/>
    <property type="project" value="UniProtKB-KW"/>
</dbReference>
<dbReference type="GO" id="GO:0005840">
    <property type="term" value="C:ribosome"/>
    <property type="evidence" value="ECO:0007669"/>
    <property type="project" value="UniProtKB-KW"/>
</dbReference>
<dbReference type="GO" id="GO:0019843">
    <property type="term" value="F:rRNA binding"/>
    <property type="evidence" value="ECO:0007669"/>
    <property type="project" value="UniProtKB-UniRule"/>
</dbReference>
<dbReference type="GO" id="GO:0003735">
    <property type="term" value="F:structural constituent of ribosome"/>
    <property type="evidence" value="ECO:0007669"/>
    <property type="project" value="InterPro"/>
</dbReference>
<dbReference type="GO" id="GO:0000049">
    <property type="term" value="F:tRNA binding"/>
    <property type="evidence" value="ECO:0007669"/>
    <property type="project" value="UniProtKB-UniRule"/>
</dbReference>
<dbReference type="GO" id="GO:0006412">
    <property type="term" value="P:translation"/>
    <property type="evidence" value="ECO:0007669"/>
    <property type="project" value="UniProtKB-UniRule"/>
</dbReference>
<dbReference type="FunFam" id="3.30.1440.10:FF:000001">
    <property type="entry name" value="50S ribosomal protein L5"/>
    <property type="match status" value="1"/>
</dbReference>
<dbReference type="Gene3D" id="3.30.1440.10">
    <property type="match status" value="1"/>
</dbReference>
<dbReference type="HAMAP" id="MF_01333_B">
    <property type="entry name" value="Ribosomal_uL5_B"/>
    <property type="match status" value="1"/>
</dbReference>
<dbReference type="InterPro" id="IPR002132">
    <property type="entry name" value="Ribosomal_uL5"/>
</dbReference>
<dbReference type="InterPro" id="IPR020930">
    <property type="entry name" value="Ribosomal_uL5_bac-type"/>
</dbReference>
<dbReference type="InterPro" id="IPR031309">
    <property type="entry name" value="Ribosomal_uL5_C"/>
</dbReference>
<dbReference type="InterPro" id="IPR022803">
    <property type="entry name" value="Ribosomal_uL5_dom_sf"/>
</dbReference>
<dbReference type="InterPro" id="IPR031310">
    <property type="entry name" value="Ribosomal_uL5_N"/>
</dbReference>
<dbReference type="NCBIfam" id="NF000585">
    <property type="entry name" value="PRK00010.1"/>
    <property type="match status" value="1"/>
</dbReference>
<dbReference type="PANTHER" id="PTHR11994">
    <property type="entry name" value="60S RIBOSOMAL PROTEIN L11-RELATED"/>
    <property type="match status" value="1"/>
</dbReference>
<dbReference type="Pfam" id="PF00281">
    <property type="entry name" value="Ribosomal_L5"/>
    <property type="match status" value="1"/>
</dbReference>
<dbReference type="Pfam" id="PF00673">
    <property type="entry name" value="Ribosomal_L5_C"/>
    <property type="match status" value="1"/>
</dbReference>
<dbReference type="PIRSF" id="PIRSF002161">
    <property type="entry name" value="Ribosomal_L5"/>
    <property type="match status" value="1"/>
</dbReference>
<dbReference type="SUPFAM" id="SSF55282">
    <property type="entry name" value="RL5-like"/>
    <property type="match status" value="1"/>
</dbReference>
<comment type="function">
    <text evidence="1">This is one of the proteins that bind and probably mediate the attachment of the 5S RNA into the large ribosomal subunit, where it forms part of the central protuberance. In the 70S ribosome it contacts protein S13 of the 30S subunit (bridge B1b), connecting the 2 subunits; this bridge is implicated in subunit movement. Contacts the P site tRNA; the 5S rRNA and some of its associated proteins might help stabilize positioning of ribosome-bound tRNAs.</text>
</comment>
<comment type="subunit">
    <text evidence="1">Part of the 50S ribosomal subunit; part of the 5S rRNA/L5/L18/L25 subcomplex. Contacts the 5S rRNA and the P site tRNA. Forms a bridge to the 30S subunit in the 70S ribosome.</text>
</comment>
<comment type="similarity">
    <text evidence="1">Belongs to the universal ribosomal protein uL5 family.</text>
</comment>
<evidence type="ECO:0000255" key="1">
    <source>
        <dbReference type="HAMAP-Rule" id="MF_01333"/>
    </source>
</evidence>
<evidence type="ECO:0000305" key="2"/>
<accession>A5FMY8</accession>
<proteinExistence type="inferred from homology"/>
<feature type="chain" id="PRO_1000086591" description="Large ribosomal subunit protein uL5">
    <location>
        <begin position="1"/>
        <end position="183"/>
    </location>
</feature>
<sequence length="183" mass="20325">MAYTPRLKEEYKSRVISALKEEFGYTNVMQVPKLEKIVLSRGVGAAVSDKKLIDYAVDELTKITGQKAVSTISKKDVASFKLRKGMPIGAKVTLRGERMYEFLDRLITSALPRVRDFGGIKATGFDGRGNYNLGVLEQIIFPEIDIDKVNKISGMDITFVTTAKTDKEAKSLLAELGLPFKKN</sequence>
<reference key="1">
    <citation type="journal article" date="2009" name="Appl. Environ. Microbiol.">
        <title>Novel features of the polysaccharide-digesting gliding bacterium Flavobacterium johnsoniae as revealed by genome sequence analysis.</title>
        <authorList>
            <person name="McBride M.J."/>
            <person name="Xie G."/>
            <person name="Martens E.C."/>
            <person name="Lapidus A."/>
            <person name="Henrissat B."/>
            <person name="Rhodes R.G."/>
            <person name="Goltsman E."/>
            <person name="Wang W."/>
            <person name="Xu J."/>
            <person name="Hunnicutt D.W."/>
            <person name="Staroscik A.M."/>
            <person name="Hoover T.R."/>
            <person name="Cheng Y.Q."/>
            <person name="Stein J.L."/>
        </authorList>
    </citation>
    <scope>NUCLEOTIDE SEQUENCE [LARGE SCALE GENOMIC DNA]</scope>
    <source>
        <strain>ATCC 17061 / DSM 2064 / JCM 8514 / BCRC 14874 / CCUG 350202 / NBRC 14942 / NCIMB 11054 / UW101</strain>
    </source>
</reference>
<protein>
    <recommendedName>
        <fullName evidence="1">Large ribosomal subunit protein uL5</fullName>
    </recommendedName>
    <alternativeName>
        <fullName evidence="2">50S ribosomal protein L5</fullName>
    </alternativeName>
</protein>
<name>RL5_FLAJ1</name>
<organism>
    <name type="scientific">Flavobacterium johnsoniae (strain ATCC 17061 / DSM 2064 / JCM 8514 / BCRC 14874 / CCUG 350202 / NBRC 14942 / NCIMB 11054 / UW101)</name>
    <name type="common">Cytophaga johnsonae</name>
    <dbReference type="NCBI Taxonomy" id="376686"/>
    <lineage>
        <taxon>Bacteria</taxon>
        <taxon>Pseudomonadati</taxon>
        <taxon>Bacteroidota</taxon>
        <taxon>Flavobacteriia</taxon>
        <taxon>Flavobacteriales</taxon>
        <taxon>Flavobacteriaceae</taxon>
        <taxon>Flavobacterium</taxon>
    </lineage>
</organism>
<gene>
    <name evidence="1" type="primary">rplE</name>
    <name type="ordered locus">Fjoh_0385</name>
</gene>
<keyword id="KW-0687">Ribonucleoprotein</keyword>
<keyword id="KW-0689">Ribosomal protein</keyword>
<keyword id="KW-0694">RNA-binding</keyword>
<keyword id="KW-0699">rRNA-binding</keyword>
<keyword id="KW-0820">tRNA-binding</keyword>